<sequence>MNLVSLQNWLDNASFAVLFLTMLLYWIGAAFPGLPAINALGTAGMAIANLSIATLLGARWIEAGYFPLSNLYESLFFLSWGITTVHLIAENSSRSRLVGVFTTPVAMGIVAFATLTLPSDMQVSEPLVPALKSNWLMMHVSVMMLSYSALMVGSLLAIAFLVITRGNNIQLQGSSVGNGGYRTNGYRLMKAGELVSQPATPPVENNGFARLESQNNGNGNTAVLNLATTPQATTLTPTETLSPQRLSLAETLDNISYRIIGLGFPLLTIGIIAGAVWANEAWGSYWSWDPKETWALITWLVFAAYLHARITRGWQGRRPAILAASGFVVVWICYLGVNLLGKGLHSYGWFF</sequence>
<proteinExistence type="inferred from homology"/>
<keyword id="KW-0201">Cytochrome c-type biogenesis</keyword>
<keyword id="KW-0472">Membrane</keyword>
<keyword id="KW-0793">Thylakoid</keyword>
<keyword id="KW-0812">Transmembrane</keyword>
<keyword id="KW-1133">Transmembrane helix</keyword>
<evidence type="ECO:0000250" key="1"/>
<evidence type="ECO:0000255" key="2">
    <source>
        <dbReference type="HAMAP-Rule" id="MF_01391"/>
    </source>
</evidence>
<dbReference type="EMBL" id="CP000117">
    <property type="protein sequence ID" value="ABA20137.1"/>
    <property type="molecule type" value="Genomic_DNA"/>
</dbReference>
<dbReference type="SMR" id="Q3MFU9"/>
<dbReference type="STRING" id="240292.Ava_0513"/>
<dbReference type="KEGG" id="ava:Ava_0513"/>
<dbReference type="eggNOG" id="COG0755">
    <property type="taxonomic scope" value="Bacteria"/>
</dbReference>
<dbReference type="HOGENOM" id="CLU_049710_2_4_3"/>
<dbReference type="Proteomes" id="UP000002533">
    <property type="component" value="Chromosome"/>
</dbReference>
<dbReference type="GO" id="GO:0031676">
    <property type="term" value="C:plasma membrane-derived thylakoid membrane"/>
    <property type="evidence" value="ECO:0007669"/>
    <property type="project" value="UniProtKB-SubCell"/>
</dbReference>
<dbReference type="GO" id="GO:0020037">
    <property type="term" value="F:heme binding"/>
    <property type="evidence" value="ECO:0007669"/>
    <property type="project" value="InterPro"/>
</dbReference>
<dbReference type="GO" id="GO:0017004">
    <property type="term" value="P:cytochrome complex assembly"/>
    <property type="evidence" value="ECO:0007669"/>
    <property type="project" value="UniProtKB-UniRule"/>
</dbReference>
<dbReference type="HAMAP" id="MF_01391">
    <property type="entry name" value="CytC_CcsA"/>
    <property type="match status" value="1"/>
</dbReference>
<dbReference type="InterPro" id="IPR002541">
    <property type="entry name" value="Cyt_c_assembly"/>
</dbReference>
<dbReference type="InterPro" id="IPR017562">
    <property type="entry name" value="Cyt_c_biogenesis_CcsA"/>
</dbReference>
<dbReference type="InterPro" id="IPR045062">
    <property type="entry name" value="Cyt_c_biogenesis_CcsA/CcmC"/>
</dbReference>
<dbReference type="NCBIfam" id="TIGR03144">
    <property type="entry name" value="cytochr_II_ccsB"/>
    <property type="match status" value="1"/>
</dbReference>
<dbReference type="PANTHER" id="PTHR30071:SF1">
    <property type="entry name" value="CYTOCHROME B_B6 PROTEIN-RELATED"/>
    <property type="match status" value="1"/>
</dbReference>
<dbReference type="PANTHER" id="PTHR30071">
    <property type="entry name" value="HEME EXPORTER PROTEIN C"/>
    <property type="match status" value="1"/>
</dbReference>
<dbReference type="Pfam" id="PF01578">
    <property type="entry name" value="Cytochrom_C_asm"/>
    <property type="match status" value="1"/>
</dbReference>
<reference key="1">
    <citation type="journal article" date="2014" name="Stand. Genomic Sci.">
        <title>Complete genome sequence of Anabaena variabilis ATCC 29413.</title>
        <authorList>
            <person name="Thiel T."/>
            <person name="Pratte B.S."/>
            <person name="Zhong J."/>
            <person name="Goodwin L."/>
            <person name="Copeland A."/>
            <person name="Lucas S."/>
            <person name="Han C."/>
            <person name="Pitluck S."/>
            <person name="Land M.L."/>
            <person name="Kyrpides N.C."/>
            <person name="Woyke T."/>
        </authorList>
    </citation>
    <scope>NUCLEOTIDE SEQUENCE [LARGE SCALE GENOMIC DNA]</scope>
    <source>
        <strain>ATCC 29413 / PCC 7937</strain>
    </source>
</reference>
<comment type="function">
    <text evidence="2">Required during biogenesis of c-type cytochromes (cytochrome c6 and cytochrome f) at the step of heme attachment.</text>
</comment>
<comment type="subunit">
    <text evidence="1">May interact with ccs1.</text>
</comment>
<comment type="subcellular location">
    <subcellularLocation>
        <location evidence="2">Cellular thylakoid membrane</location>
        <topology evidence="2">Multi-pass membrane protein</topology>
    </subcellularLocation>
</comment>
<comment type="similarity">
    <text evidence="2">Belongs to the CcmF/CycK/Ccl1/NrfE/CcsA family.</text>
</comment>
<name>CCSA_TRIV2</name>
<accession>Q3MFU9</accession>
<gene>
    <name evidence="2" type="primary">ccsA</name>
    <name type="ordered locus">Ava_0513</name>
</gene>
<protein>
    <recommendedName>
        <fullName evidence="2">Cytochrome c biogenesis protein CcsA</fullName>
    </recommendedName>
</protein>
<feature type="chain" id="PRO_0000353698" description="Cytochrome c biogenesis protein CcsA">
    <location>
        <begin position="1"/>
        <end position="351"/>
    </location>
</feature>
<feature type="transmembrane region" description="Helical" evidence="2">
    <location>
        <begin position="17"/>
        <end position="37"/>
    </location>
</feature>
<feature type="transmembrane region" description="Helical" evidence="2">
    <location>
        <begin position="38"/>
        <end position="58"/>
    </location>
</feature>
<feature type="transmembrane region" description="Helical" evidence="2">
    <location>
        <begin position="68"/>
        <end position="88"/>
    </location>
</feature>
<feature type="transmembrane region" description="Helical" evidence="2">
    <location>
        <begin position="97"/>
        <end position="117"/>
    </location>
</feature>
<feature type="transmembrane region" description="Helical" evidence="2">
    <location>
        <begin position="143"/>
        <end position="163"/>
    </location>
</feature>
<feature type="transmembrane region" description="Helical" evidence="2">
    <location>
        <begin position="259"/>
        <end position="279"/>
    </location>
</feature>
<feature type="transmembrane region" description="Helical" evidence="2">
    <location>
        <begin position="286"/>
        <end position="306"/>
    </location>
</feature>
<feature type="transmembrane region" description="Helical" evidence="2">
    <location>
        <begin position="320"/>
        <end position="340"/>
    </location>
</feature>
<organism>
    <name type="scientific">Trichormus variabilis (strain ATCC 29413 / PCC 7937)</name>
    <name type="common">Anabaena variabilis</name>
    <dbReference type="NCBI Taxonomy" id="240292"/>
    <lineage>
        <taxon>Bacteria</taxon>
        <taxon>Bacillati</taxon>
        <taxon>Cyanobacteriota</taxon>
        <taxon>Cyanophyceae</taxon>
        <taxon>Nostocales</taxon>
        <taxon>Nostocaceae</taxon>
        <taxon>Trichormus</taxon>
    </lineage>
</organism>